<keyword id="KW-0238">DNA-binding</keyword>
<keyword id="KW-0479">Metal-binding</keyword>
<keyword id="KW-1185">Reference proteome</keyword>
<keyword id="KW-0694">RNA-binding</keyword>
<keyword id="KW-0862">Zinc</keyword>
<keyword id="KW-0863">Zinc-finger</keyword>
<dbReference type="EMBL" id="AC091247">
    <property type="protein sequence ID" value="AAK82455.1"/>
    <property type="molecule type" value="Genomic_DNA"/>
</dbReference>
<dbReference type="EMBL" id="AC096687">
    <property type="protein sequence ID" value="AAL79760.1"/>
    <property type="molecule type" value="Genomic_DNA"/>
</dbReference>
<dbReference type="EMBL" id="DP000009">
    <property type="protein sequence ID" value="ABF99645.1"/>
    <property type="molecule type" value="Genomic_DNA"/>
</dbReference>
<dbReference type="EMBL" id="AP008209">
    <property type="protein sequence ID" value="BAF13677.1"/>
    <property type="molecule type" value="Genomic_DNA"/>
</dbReference>
<dbReference type="EMBL" id="AP014959">
    <property type="protein sequence ID" value="BAS87159.1"/>
    <property type="molecule type" value="Genomic_DNA"/>
</dbReference>
<dbReference type="EMBL" id="CM000140">
    <property type="protein sequence ID" value="EAZ29133.1"/>
    <property type="molecule type" value="Genomic_DNA"/>
</dbReference>
<dbReference type="EMBL" id="AK071472">
    <property type="status" value="NOT_ANNOTATED_CDS"/>
    <property type="molecule type" value="mRNA"/>
</dbReference>
<dbReference type="RefSeq" id="XP_015628559.1">
    <property type="nucleotide sequence ID" value="XM_015773073.1"/>
</dbReference>
<dbReference type="SMR" id="Q10B98"/>
<dbReference type="FunCoup" id="Q10B98">
    <property type="interactions" value="143"/>
</dbReference>
<dbReference type="STRING" id="39947.Q10B98"/>
<dbReference type="PaxDb" id="39947-Q10B98"/>
<dbReference type="EnsemblPlants" id="Os03t0826400-01">
    <property type="protein sequence ID" value="Os03t0826400-01"/>
    <property type="gene ID" value="Os03g0826400"/>
</dbReference>
<dbReference type="Gramene" id="Os03t0826400-01">
    <property type="protein sequence ID" value="Os03t0826400-01"/>
    <property type="gene ID" value="Os03g0826400"/>
</dbReference>
<dbReference type="KEGG" id="dosa:Os03g0826400"/>
<dbReference type="eggNOG" id="KOG0126">
    <property type="taxonomic scope" value="Eukaryota"/>
</dbReference>
<dbReference type="HOGENOM" id="CLU_045495_0_2_1"/>
<dbReference type="InParanoid" id="Q10B98"/>
<dbReference type="OMA" id="HKIFPDR"/>
<dbReference type="OrthoDB" id="2573941at2759"/>
<dbReference type="Proteomes" id="UP000000763">
    <property type="component" value="Chromosome 3"/>
</dbReference>
<dbReference type="Proteomes" id="UP000007752">
    <property type="component" value="Chromosome 3"/>
</dbReference>
<dbReference type="Proteomes" id="UP000059680">
    <property type="component" value="Chromosome 3"/>
</dbReference>
<dbReference type="GO" id="GO:0071011">
    <property type="term" value="C:precatalytic spliceosome"/>
    <property type="evidence" value="ECO:0000318"/>
    <property type="project" value="GO_Central"/>
</dbReference>
<dbReference type="GO" id="GO:0005686">
    <property type="term" value="C:U2 snRNP"/>
    <property type="evidence" value="ECO:0000318"/>
    <property type="project" value="GO_Central"/>
</dbReference>
<dbReference type="GO" id="GO:0003677">
    <property type="term" value="F:DNA binding"/>
    <property type="evidence" value="ECO:0007669"/>
    <property type="project" value="UniProtKB-KW"/>
</dbReference>
<dbReference type="GO" id="GO:0003723">
    <property type="term" value="F:RNA binding"/>
    <property type="evidence" value="ECO:0007669"/>
    <property type="project" value="UniProtKB-KW"/>
</dbReference>
<dbReference type="GO" id="GO:0008270">
    <property type="term" value="F:zinc ion binding"/>
    <property type="evidence" value="ECO:0007669"/>
    <property type="project" value="UniProtKB-KW"/>
</dbReference>
<dbReference type="GO" id="GO:0000398">
    <property type="term" value="P:mRNA splicing, via spliceosome"/>
    <property type="evidence" value="ECO:0000318"/>
    <property type="project" value="GO_Central"/>
</dbReference>
<dbReference type="CDD" id="cd12411">
    <property type="entry name" value="RRM_ist3_like"/>
    <property type="match status" value="1"/>
</dbReference>
<dbReference type="FunFam" id="3.30.70.330:FF:000829">
    <property type="entry name" value="Putative U2 auxiliary factor small subunit, Nucleotide-binding alpha-beta plait domain protein"/>
    <property type="match status" value="1"/>
</dbReference>
<dbReference type="Gene3D" id="3.30.1370.210">
    <property type="match status" value="1"/>
</dbReference>
<dbReference type="Gene3D" id="3.30.70.330">
    <property type="match status" value="1"/>
</dbReference>
<dbReference type="InterPro" id="IPR012677">
    <property type="entry name" value="Nucleotide-bd_a/b_plait_sf"/>
</dbReference>
<dbReference type="InterPro" id="IPR035979">
    <property type="entry name" value="RBD_domain_sf"/>
</dbReference>
<dbReference type="InterPro" id="IPR051847">
    <property type="entry name" value="RNA_proc/Spliceosome_comp"/>
</dbReference>
<dbReference type="InterPro" id="IPR000504">
    <property type="entry name" value="RRM_dom"/>
</dbReference>
<dbReference type="InterPro" id="IPR045844">
    <property type="entry name" value="RRM_Ist3-like"/>
</dbReference>
<dbReference type="InterPro" id="IPR000571">
    <property type="entry name" value="Znf_CCCH"/>
</dbReference>
<dbReference type="PANTHER" id="PTHR45880">
    <property type="entry name" value="RNA-BINDING MOTIF PROTEIN, X-LINKED 2"/>
    <property type="match status" value="1"/>
</dbReference>
<dbReference type="PANTHER" id="PTHR45880:SF1">
    <property type="entry name" value="RNA-BINDING MOTIF PROTEIN, X-LINKED 2"/>
    <property type="match status" value="1"/>
</dbReference>
<dbReference type="Pfam" id="PF00076">
    <property type="entry name" value="RRM_1"/>
    <property type="match status" value="1"/>
</dbReference>
<dbReference type="Pfam" id="PF00642">
    <property type="entry name" value="zf-CCCH"/>
    <property type="match status" value="1"/>
</dbReference>
<dbReference type="SMART" id="SM00360">
    <property type="entry name" value="RRM"/>
    <property type="match status" value="1"/>
</dbReference>
<dbReference type="SMART" id="SM00356">
    <property type="entry name" value="ZnF_C3H1"/>
    <property type="match status" value="1"/>
</dbReference>
<dbReference type="SUPFAM" id="SSF54928">
    <property type="entry name" value="RNA-binding domain, RBD"/>
    <property type="match status" value="1"/>
</dbReference>
<dbReference type="PROSITE" id="PS50102">
    <property type="entry name" value="RRM"/>
    <property type="match status" value="1"/>
</dbReference>
<dbReference type="PROSITE" id="PS50103">
    <property type="entry name" value="ZF_C3H1"/>
    <property type="match status" value="1"/>
</dbReference>
<sequence>MNPLTQVKRTQVINQKEALLGIGEDGSWHAKFKDSAYVFVGGIPYDLTEGDLLAVFAQYGEVVDVNLVRDKGTGKSKGFAFLAYEDQRSTILAVDNLNGAKVLGRIVRVDHVSKYKKKEEEDEEELQKKREARGVCYAFQKGECNRGASCRYSHDEQRNANTGWGSKEESKARWEHDRHHEPPMSHKKFPSSAGEQRFPDRAKEENKSTGREGQSSRSEAYKDRDSRLRHSDRGSKDHDRYRHDRSPERSRGDRQRNNDRYAQGRDEKSERYRSEVKHDEGDQKRSRRDTDSSGHYERRGNEDSERYRKSRR</sequence>
<reference key="1">
    <citation type="journal article" date="2005" name="Genome Res.">
        <title>Sequence, annotation, and analysis of synteny between rice chromosome 3 and diverged grass species.</title>
        <authorList>
            <consortium name="The rice chromosome 3 sequencing consortium"/>
            <person name="Buell C.R."/>
            <person name="Yuan Q."/>
            <person name="Ouyang S."/>
            <person name="Liu J."/>
            <person name="Zhu W."/>
            <person name="Wang A."/>
            <person name="Maiti R."/>
            <person name="Haas B."/>
            <person name="Wortman J."/>
            <person name="Pertea M."/>
            <person name="Jones K.M."/>
            <person name="Kim M."/>
            <person name="Overton L."/>
            <person name="Tsitrin T."/>
            <person name="Fadrosh D."/>
            <person name="Bera J."/>
            <person name="Weaver B."/>
            <person name="Jin S."/>
            <person name="Johri S."/>
            <person name="Reardon M."/>
            <person name="Webb K."/>
            <person name="Hill J."/>
            <person name="Moffat K."/>
            <person name="Tallon L."/>
            <person name="Van Aken S."/>
            <person name="Lewis M."/>
            <person name="Utterback T."/>
            <person name="Feldblyum T."/>
            <person name="Zismann V."/>
            <person name="Iobst S."/>
            <person name="Hsiao J."/>
            <person name="de Vazeille A.R."/>
            <person name="Salzberg S.L."/>
            <person name="White O."/>
            <person name="Fraser C.M."/>
            <person name="Yu Y."/>
            <person name="Kim H."/>
            <person name="Rambo T."/>
            <person name="Currie J."/>
            <person name="Collura K."/>
            <person name="Kernodle-Thompson S."/>
            <person name="Wei F."/>
            <person name="Kudrna K."/>
            <person name="Ammiraju J.S.S."/>
            <person name="Luo M."/>
            <person name="Goicoechea J.L."/>
            <person name="Wing R.A."/>
            <person name="Henry D."/>
            <person name="Oates R."/>
            <person name="Palmer M."/>
            <person name="Pries G."/>
            <person name="Saski C."/>
            <person name="Simmons J."/>
            <person name="Soderlund C."/>
            <person name="Nelson W."/>
            <person name="de la Bastide M."/>
            <person name="Spiegel L."/>
            <person name="Nascimento L."/>
            <person name="Huang E."/>
            <person name="Preston R."/>
            <person name="Zutavern T."/>
            <person name="Palmer L."/>
            <person name="O'Shaughnessy A."/>
            <person name="Dike S."/>
            <person name="McCombie W.R."/>
            <person name="Minx P."/>
            <person name="Cordum H."/>
            <person name="Wilson R."/>
            <person name="Jin W."/>
            <person name="Lee H.R."/>
            <person name="Jiang J."/>
            <person name="Jackson S."/>
        </authorList>
    </citation>
    <scope>NUCLEOTIDE SEQUENCE [LARGE SCALE GENOMIC DNA]</scope>
    <source>
        <strain>cv. Nipponbare</strain>
    </source>
</reference>
<reference key="2">
    <citation type="journal article" date="2005" name="Nature">
        <title>The map-based sequence of the rice genome.</title>
        <authorList>
            <consortium name="International rice genome sequencing project (IRGSP)"/>
        </authorList>
    </citation>
    <scope>NUCLEOTIDE SEQUENCE [LARGE SCALE GENOMIC DNA]</scope>
    <source>
        <strain>cv. Nipponbare</strain>
    </source>
</reference>
<reference key="3">
    <citation type="journal article" date="2008" name="Nucleic Acids Res.">
        <title>The rice annotation project database (RAP-DB): 2008 update.</title>
        <authorList>
            <consortium name="The rice annotation project (RAP)"/>
        </authorList>
    </citation>
    <scope>GENOME REANNOTATION</scope>
    <source>
        <strain>cv. Nipponbare</strain>
    </source>
</reference>
<reference key="4">
    <citation type="journal article" date="2013" name="Rice">
        <title>Improvement of the Oryza sativa Nipponbare reference genome using next generation sequence and optical map data.</title>
        <authorList>
            <person name="Kawahara Y."/>
            <person name="de la Bastide M."/>
            <person name="Hamilton J.P."/>
            <person name="Kanamori H."/>
            <person name="McCombie W.R."/>
            <person name="Ouyang S."/>
            <person name="Schwartz D.C."/>
            <person name="Tanaka T."/>
            <person name="Wu J."/>
            <person name="Zhou S."/>
            <person name="Childs K.L."/>
            <person name="Davidson R.M."/>
            <person name="Lin H."/>
            <person name="Quesada-Ocampo L."/>
            <person name="Vaillancourt B."/>
            <person name="Sakai H."/>
            <person name="Lee S.S."/>
            <person name="Kim J."/>
            <person name="Numa H."/>
            <person name="Itoh T."/>
            <person name="Buell C.R."/>
            <person name="Matsumoto T."/>
        </authorList>
    </citation>
    <scope>GENOME REANNOTATION</scope>
    <source>
        <strain>cv. Nipponbare</strain>
    </source>
</reference>
<reference key="5">
    <citation type="journal article" date="2005" name="PLoS Biol.">
        <title>The genomes of Oryza sativa: a history of duplications.</title>
        <authorList>
            <person name="Yu J."/>
            <person name="Wang J."/>
            <person name="Lin W."/>
            <person name="Li S."/>
            <person name="Li H."/>
            <person name="Zhou J."/>
            <person name="Ni P."/>
            <person name="Dong W."/>
            <person name="Hu S."/>
            <person name="Zeng C."/>
            <person name="Zhang J."/>
            <person name="Zhang Y."/>
            <person name="Li R."/>
            <person name="Xu Z."/>
            <person name="Li S."/>
            <person name="Li X."/>
            <person name="Zheng H."/>
            <person name="Cong L."/>
            <person name="Lin L."/>
            <person name="Yin J."/>
            <person name="Geng J."/>
            <person name="Li G."/>
            <person name="Shi J."/>
            <person name="Liu J."/>
            <person name="Lv H."/>
            <person name="Li J."/>
            <person name="Wang J."/>
            <person name="Deng Y."/>
            <person name="Ran L."/>
            <person name="Shi X."/>
            <person name="Wang X."/>
            <person name="Wu Q."/>
            <person name="Li C."/>
            <person name="Ren X."/>
            <person name="Wang J."/>
            <person name="Wang X."/>
            <person name="Li D."/>
            <person name="Liu D."/>
            <person name="Zhang X."/>
            <person name="Ji Z."/>
            <person name="Zhao W."/>
            <person name="Sun Y."/>
            <person name="Zhang Z."/>
            <person name="Bao J."/>
            <person name="Han Y."/>
            <person name="Dong L."/>
            <person name="Ji J."/>
            <person name="Chen P."/>
            <person name="Wu S."/>
            <person name="Liu J."/>
            <person name="Xiao Y."/>
            <person name="Bu D."/>
            <person name="Tan J."/>
            <person name="Yang L."/>
            <person name="Ye C."/>
            <person name="Zhang J."/>
            <person name="Xu J."/>
            <person name="Zhou Y."/>
            <person name="Yu Y."/>
            <person name="Zhang B."/>
            <person name="Zhuang S."/>
            <person name="Wei H."/>
            <person name="Liu B."/>
            <person name="Lei M."/>
            <person name="Yu H."/>
            <person name="Li Y."/>
            <person name="Xu H."/>
            <person name="Wei S."/>
            <person name="He X."/>
            <person name="Fang L."/>
            <person name="Zhang Z."/>
            <person name="Zhang Y."/>
            <person name="Huang X."/>
            <person name="Su Z."/>
            <person name="Tong W."/>
            <person name="Li J."/>
            <person name="Tong Z."/>
            <person name="Li S."/>
            <person name="Ye J."/>
            <person name="Wang L."/>
            <person name="Fang L."/>
            <person name="Lei T."/>
            <person name="Chen C.-S."/>
            <person name="Chen H.-C."/>
            <person name="Xu Z."/>
            <person name="Li H."/>
            <person name="Huang H."/>
            <person name="Zhang F."/>
            <person name="Xu H."/>
            <person name="Li N."/>
            <person name="Zhao C."/>
            <person name="Li S."/>
            <person name="Dong L."/>
            <person name="Huang Y."/>
            <person name="Li L."/>
            <person name="Xi Y."/>
            <person name="Qi Q."/>
            <person name="Li W."/>
            <person name="Zhang B."/>
            <person name="Hu W."/>
            <person name="Zhang Y."/>
            <person name="Tian X."/>
            <person name="Jiao Y."/>
            <person name="Liang X."/>
            <person name="Jin J."/>
            <person name="Gao L."/>
            <person name="Zheng W."/>
            <person name="Hao B."/>
            <person name="Liu S.-M."/>
            <person name="Wang W."/>
            <person name="Yuan L."/>
            <person name="Cao M."/>
            <person name="McDermott J."/>
            <person name="Samudrala R."/>
            <person name="Wang J."/>
            <person name="Wong G.K.-S."/>
            <person name="Yang H."/>
        </authorList>
    </citation>
    <scope>NUCLEOTIDE SEQUENCE [LARGE SCALE GENOMIC DNA]</scope>
    <source>
        <strain>cv. Nipponbare</strain>
    </source>
</reference>
<reference key="6">
    <citation type="journal article" date="2003" name="Science">
        <title>Collection, mapping, and annotation of over 28,000 cDNA clones from japonica rice.</title>
        <authorList>
            <consortium name="The rice full-length cDNA consortium"/>
        </authorList>
    </citation>
    <scope>NUCLEOTIDE SEQUENCE [LARGE SCALE MRNA]</scope>
    <source>
        <strain>cv. Nipponbare</strain>
    </source>
</reference>
<reference key="7">
    <citation type="journal article" date="2008" name="BMC Genomics">
        <title>Genome-wide analysis of CCCH zinc finger family in Arabidopsis and rice.</title>
        <authorList>
            <person name="Wang D."/>
            <person name="Guo Y."/>
            <person name="Wu C."/>
            <person name="Yang G."/>
            <person name="Li Y."/>
            <person name="Zheng C."/>
        </authorList>
    </citation>
    <scope>NOMENCLATURE</scope>
</reference>
<feature type="chain" id="PRO_0000346821" description="Zinc finger CCCH domain-containing protein 25">
    <location>
        <begin position="1"/>
        <end position="312"/>
    </location>
</feature>
<feature type="domain" description="RRM" evidence="1">
    <location>
        <begin position="36"/>
        <end position="114"/>
    </location>
</feature>
<feature type="zinc finger region" description="C3H1-type" evidence="2">
    <location>
        <begin position="130"/>
        <end position="157"/>
    </location>
</feature>
<feature type="region of interest" description="Disordered" evidence="3">
    <location>
        <begin position="153"/>
        <end position="312"/>
    </location>
</feature>
<feature type="compositionally biased region" description="Basic and acidic residues" evidence="3">
    <location>
        <begin position="166"/>
        <end position="184"/>
    </location>
</feature>
<feature type="compositionally biased region" description="Basic and acidic residues" evidence="3">
    <location>
        <begin position="197"/>
        <end position="210"/>
    </location>
</feature>
<feature type="compositionally biased region" description="Basic and acidic residues" evidence="3">
    <location>
        <begin position="219"/>
        <end position="312"/>
    </location>
</feature>
<feature type="sequence conflict" description="In Ref. 6; AK071472." evidence="4" ref="6">
    <original>R</original>
    <variation>H</variation>
    <location>
        <position position="224"/>
    </location>
</feature>
<evidence type="ECO:0000255" key="1">
    <source>
        <dbReference type="PROSITE-ProRule" id="PRU00176"/>
    </source>
</evidence>
<evidence type="ECO:0000255" key="2">
    <source>
        <dbReference type="PROSITE-ProRule" id="PRU00723"/>
    </source>
</evidence>
<evidence type="ECO:0000256" key="3">
    <source>
        <dbReference type="SAM" id="MobiDB-lite"/>
    </source>
</evidence>
<evidence type="ECO:0000305" key="4"/>
<organism>
    <name type="scientific">Oryza sativa subsp. japonica</name>
    <name type="common">Rice</name>
    <dbReference type="NCBI Taxonomy" id="39947"/>
    <lineage>
        <taxon>Eukaryota</taxon>
        <taxon>Viridiplantae</taxon>
        <taxon>Streptophyta</taxon>
        <taxon>Embryophyta</taxon>
        <taxon>Tracheophyta</taxon>
        <taxon>Spermatophyta</taxon>
        <taxon>Magnoliopsida</taxon>
        <taxon>Liliopsida</taxon>
        <taxon>Poales</taxon>
        <taxon>Poaceae</taxon>
        <taxon>BOP clade</taxon>
        <taxon>Oryzoideae</taxon>
        <taxon>Oryzeae</taxon>
        <taxon>Oryzinae</taxon>
        <taxon>Oryza</taxon>
        <taxon>Oryza sativa</taxon>
    </lineage>
</organism>
<proteinExistence type="evidence at transcript level"/>
<accession>Q10B98</accession>
<accession>A0A0P0W578</accession>
<accession>Q94GF0</accession>
<protein>
    <recommendedName>
        <fullName>Zinc finger CCCH domain-containing protein 25</fullName>
        <shortName>OsC3H25</shortName>
    </recommendedName>
</protein>
<gene>
    <name type="ordered locus">Os03g0826400</name>
    <name type="ordered locus">LOC_Os03g61110</name>
    <name type="ORF">OJ1111_B11.10</name>
    <name type="ORF">OsJ_012616</name>
    <name type="ORF">OSJNBa0010E04.12</name>
</gene>
<name>C3H25_ORYSJ</name>